<evidence type="ECO:0000250" key="1"/>
<evidence type="ECO:0000255" key="2"/>
<evidence type="ECO:0000255" key="3">
    <source>
        <dbReference type="PROSITE-ProRule" id="PRU00145"/>
    </source>
</evidence>
<evidence type="ECO:0000255" key="4">
    <source>
        <dbReference type="PROSITE-ProRule" id="PRU00189"/>
    </source>
</evidence>
<evidence type="ECO:0000269" key="5">
    <source>
    </source>
</evidence>
<evidence type="ECO:0000269" key="6">
    <source>
    </source>
</evidence>
<evidence type="ECO:0000269" key="7">
    <source>
    </source>
</evidence>
<evidence type="ECO:0000269" key="8">
    <source>
    </source>
</evidence>
<evidence type="ECO:0000269" key="9">
    <source>
    </source>
</evidence>
<evidence type="ECO:0000269" key="10">
    <source>
    </source>
</evidence>
<evidence type="ECO:0007829" key="11">
    <source>
        <dbReference type="PDB" id="1FGY"/>
    </source>
</evidence>
<evidence type="ECO:0007829" key="12">
    <source>
        <dbReference type="PDB" id="2R09"/>
    </source>
</evidence>
<sequence length="399" mass="46280">MDEGGGGEGGSVPEDLSLEEREELLDIRRRKKELIDDIERLKYEIAEVMTEIDNLTSVEESKTTQRNKQIAMGRKKFNMDPKKGIQFLIENDLLQSSPEDVAQFLYKGEGLNKTVIGDYLGERDDFNIKVLQAFVELHEFADLNLVQALRQFLWSFRLPGEAQKIDRMMEAFASRYCLCNPGVFQSTDTCYVLSFAIIMLNTSLHNHNVRDKPTAERFITMNRGINEGGDLPEELLRNLYESIKNEPFKIPEDDGNDLTHTFFNPDREGWLLKLGGRVKTWKRRWFILTDNCLYYFEYTTDKEPRGIIPLENLSIREVEDPRKPNCFELYNPSHKGQVIKACKTEADGRVVEGNHVVYRISAPSPEEKEEWMKSIKASISRDPFYDMLATRKRRIANKK</sequence>
<feature type="chain" id="PRO_0000120201" description="Cytohesin-3">
    <location>
        <begin position="1"/>
        <end position="399"/>
    </location>
</feature>
<feature type="domain" description="SEC7" evidence="4">
    <location>
        <begin position="77"/>
        <end position="206"/>
    </location>
</feature>
<feature type="domain" description="PH" evidence="3">
    <location>
        <begin position="264"/>
        <end position="380"/>
    </location>
</feature>
<feature type="region of interest" description="C-terminal autoinhibitory region">
    <location>
        <begin position="391"/>
        <end position="399"/>
    </location>
</feature>
<feature type="coiled-coil region" evidence="2">
    <location>
        <begin position="14"/>
        <end position="61"/>
    </location>
</feature>
<feature type="binding site">
    <location>
        <begin position="273"/>
        <end position="280"/>
    </location>
    <ligand>
        <name>a 1,2-diacyl-sn-glycero-3-phospho-(1D-myo-inositol-3,4,5-trisphosphate)</name>
        <dbReference type="ChEBI" id="CHEBI:57836"/>
    </ligand>
</feature>
<feature type="binding site" evidence="6 8">
    <location>
        <position position="284"/>
    </location>
    <ligand>
        <name>a 1,2-diacyl-sn-glycero-3-phospho-(1D-myo-inositol-3,4,5-trisphosphate)</name>
        <dbReference type="ChEBI" id="CHEBI:57836"/>
    </ligand>
</feature>
<feature type="binding site" evidence="6 8">
    <location>
        <position position="295"/>
    </location>
    <ligand>
        <name>a 1,2-diacyl-sn-glycero-3-phospho-(1D-myo-inositol-3,4,5-trisphosphate)</name>
        <dbReference type="ChEBI" id="CHEBI:57836"/>
    </ligand>
</feature>
<feature type="binding site" evidence="6 8">
    <location>
        <position position="305"/>
    </location>
    <ligand>
        <name>a 1,2-diacyl-sn-glycero-3-phospho-(1D-myo-inositol-3,4,5-trisphosphate)</name>
        <dbReference type="ChEBI" id="CHEBI:57836"/>
    </ligand>
</feature>
<feature type="binding site" evidence="6 8">
    <location>
        <position position="354"/>
    </location>
    <ligand>
        <name>a 1,2-diacyl-sn-glycero-3-phospho-(1D-myo-inositol-3,4,5-trisphosphate)</name>
        <dbReference type="ChEBI" id="CHEBI:57836"/>
    </ligand>
</feature>
<feature type="mutagenesis site" description="Impairs epithelium polarization." evidence="10">
    <original>E</original>
    <variation>K</variation>
    <location>
        <position position="161"/>
    </location>
</feature>
<feature type="mutagenesis site" description="Abolishes phosphatidylinositol 3,4,5-trisphosphate binding." evidence="8">
    <original>K</original>
    <variation>A</variation>
    <location>
        <position position="273"/>
    </location>
</feature>
<feature type="mutagenesis site" description="Reduces phosphatidylinositol 3,4,5-trisphosphate binding." evidence="8">
    <original>R</original>
    <variation>A</variation>
    <variation>G</variation>
    <location>
        <position position="277"/>
    </location>
</feature>
<feature type="mutagenesis site" description="Reduces phosphatidylinositol 3,4,5-trisphosphate binding." evidence="8">
    <original>T</original>
    <variation>A</variation>
    <variation>G</variation>
    <location>
        <position position="280"/>
    </location>
</feature>
<feature type="mutagenesis site" description="Reduces phosphatidylinositol 3,4,5-trisphosphate binding." evidence="8">
    <original>K</original>
    <variation>A</variation>
    <location>
        <position position="282"/>
    </location>
</feature>
<feature type="mutagenesis site" description="Abolishes phosphatidylinositol 3,4,5-trisphosphate binding." evidence="8">
    <original>R</original>
    <variation>A</variation>
    <location>
        <position position="284"/>
    </location>
</feature>
<feature type="mutagenesis site" description="Reduces phosphatidylinositol 3,4,5-trisphosphate binding." evidence="8">
    <original>Y</original>
    <variation>F</variation>
    <location>
        <position position="295"/>
    </location>
</feature>
<feature type="mutagenesis site" description="Abolishes phosphatidylinositol 3,4,5-trisphosphate binding." evidence="8">
    <original>R</original>
    <variation>A</variation>
    <location>
        <position position="305"/>
    </location>
</feature>
<feature type="mutagenesis site" description="Abolishes phosphatidylinositol 3,4,5-trisphosphate binding." evidence="8">
    <original>K</original>
    <variation>A</variation>
    <location>
        <position position="343"/>
    </location>
</feature>
<feature type="mutagenesis site" description="Slightly reduces phosphatidylinositol 3,4,5-trisphosphate binding." evidence="8">
    <original>N</original>
    <variation>A</variation>
    <location>
        <position position="354"/>
    </location>
</feature>
<feature type="mutagenesis site" description="Abolishes phosphatidylinositol 3,4,5-trisphosphate binding." evidence="8">
    <original>H</original>
    <variation>A</variation>
    <location>
        <position position="355"/>
    </location>
</feature>
<feature type="mutagenesis site" description="Impairs autoinhibition; when associated with A-392." evidence="9">
    <original>L</original>
    <variation>A</variation>
    <location>
        <position position="388"/>
    </location>
</feature>
<feature type="mutagenesis site" description="Impairs autoinhibition; when associated with A-388." evidence="9">
    <original>K</original>
    <variation>A</variation>
    <location>
        <position position="392"/>
    </location>
</feature>
<feature type="helix" evidence="12">
    <location>
        <begin position="64"/>
        <end position="79"/>
    </location>
</feature>
<feature type="helix" evidence="12">
    <location>
        <begin position="81"/>
        <end position="90"/>
    </location>
</feature>
<feature type="helix" evidence="12">
    <location>
        <begin position="98"/>
        <end position="107"/>
    </location>
</feature>
<feature type="helix" evidence="12">
    <location>
        <begin position="113"/>
        <end position="121"/>
    </location>
</feature>
<feature type="helix" evidence="12">
    <location>
        <begin position="125"/>
        <end position="136"/>
    </location>
</feature>
<feature type="helix" evidence="12">
    <location>
        <begin position="145"/>
        <end position="152"/>
    </location>
</feature>
<feature type="helix" evidence="12">
    <location>
        <begin position="162"/>
        <end position="179"/>
    </location>
</feature>
<feature type="strand" evidence="12">
    <location>
        <begin position="183"/>
        <end position="185"/>
    </location>
</feature>
<feature type="helix" evidence="12">
    <location>
        <begin position="187"/>
        <end position="205"/>
    </location>
</feature>
<feature type="helix" evidence="12">
    <location>
        <begin position="215"/>
        <end position="221"/>
    </location>
</feature>
<feature type="turn" evidence="12">
    <location>
        <begin position="222"/>
        <end position="225"/>
    </location>
</feature>
<feature type="helix" evidence="12">
    <location>
        <begin position="233"/>
        <end position="245"/>
    </location>
</feature>
<feature type="helix" evidence="12">
    <location>
        <begin position="258"/>
        <end position="260"/>
    </location>
</feature>
<feature type="strand" evidence="11">
    <location>
        <begin position="266"/>
        <end position="274"/>
    </location>
</feature>
<feature type="strand" evidence="11">
    <location>
        <begin position="276"/>
        <end position="278"/>
    </location>
</feature>
<feature type="strand" evidence="11">
    <location>
        <begin position="281"/>
        <end position="289"/>
    </location>
</feature>
<feature type="strand" evidence="11">
    <location>
        <begin position="292"/>
        <end position="298"/>
    </location>
</feature>
<feature type="strand" evidence="11">
    <location>
        <begin position="305"/>
        <end position="309"/>
    </location>
</feature>
<feature type="strand" evidence="11">
    <location>
        <begin position="314"/>
        <end position="318"/>
    </location>
</feature>
<feature type="strand" evidence="11">
    <location>
        <begin position="324"/>
        <end position="330"/>
    </location>
</feature>
<feature type="strand" evidence="11">
    <location>
        <begin position="332"/>
        <end position="334"/>
    </location>
</feature>
<feature type="strand" evidence="11">
    <location>
        <begin position="342"/>
        <end position="344"/>
    </location>
</feature>
<feature type="strand" evidence="11">
    <location>
        <begin position="350"/>
        <end position="352"/>
    </location>
</feature>
<feature type="strand" evidence="11">
    <location>
        <begin position="356"/>
        <end position="361"/>
    </location>
</feature>
<feature type="helix" evidence="11">
    <location>
        <begin position="365"/>
        <end position="381"/>
    </location>
</feature>
<feature type="turn" evidence="11">
    <location>
        <begin position="383"/>
        <end position="386"/>
    </location>
</feature>
<gene>
    <name type="primary">Cyth3</name>
    <name type="synonym">Grp1</name>
    <name type="synonym">Pscd3</name>
</gene>
<reference key="1">
    <citation type="journal article" date="1997" name="Science">
        <title>Signaling by phosphoinositide-3,4,5-trisphosphate through proteins containing pleckstrin and Sec7 homology domains.</title>
        <authorList>
            <person name="Klarlund J.K."/>
            <person name="Guilherme A."/>
            <person name="Holik J.J."/>
            <person name="Virbasius J.V."/>
            <person name="Chawla A."/>
            <person name="Czech M.P."/>
        </authorList>
    </citation>
    <scope>NUCLEOTIDE SEQUENCE [GENOMIC DNA]</scope>
</reference>
<reference key="2">
    <citation type="journal article" date="1998" name="FEBS Lett.">
        <title>Complex regulation of multiple cytohesin-like genes in murine tissues and cells.</title>
        <authorList>
            <person name="Kim H.-S."/>
            <person name="Chen Y."/>
            <person name="Lonai P."/>
        </authorList>
    </citation>
    <scope>NUCLEOTIDE SEQUENCE [MRNA]</scope>
</reference>
<reference key="3">
    <citation type="journal article" date="2000" name="J. Immunol.">
        <title>Anergic T lymphocytes selectively express an integrin regulatory protein of the cytohesin family.</title>
        <authorList>
            <person name="Korthauer U."/>
            <person name="Nagel W."/>
            <person name="Davis E.M."/>
            <person name="Le Beau M.M."/>
            <person name="Menon R.S."/>
            <person name="Mitchell E.O."/>
            <person name="Kozak C.A."/>
            <person name="Kolanus W."/>
            <person name="Bluestone J.A."/>
        </authorList>
    </citation>
    <scope>NUCLEOTIDE SEQUENCE [MRNA]</scope>
    <source>
        <strain>NIH Swiss</strain>
    </source>
</reference>
<reference key="4">
    <citation type="journal article" date="2004" name="Genome Res.">
        <title>The status, quality, and expansion of the NIH full-length cDNA project: the Mammalian Gene Collection (MGC).</title>
        <authorList>
            <consortium name="The MGC Project Team"/>
        </authorList>
    </citation>
    <scope>NUCLEOTIDE SEQUENCE [LARGE SCALE MRNA]</scope>
    <source>
        <strain>FVB/N</strain>
        <tissue>Mammary gland</tissue>
    </source>
</reference>
<reference key="5">
    <citation type="journal article" date="2000" name="J. Biol. Chem.">
        <title>Interaction of GRASP, a protein encoded by a novel retinoic acid-induced gene, with members of the cytohesin family of guanine nucleotide exchange factors.</title>
        <authorList>
            <person name="Nevrivy D.J."/>
            <person name="Peterson V.J."/>
            <person name="Avram D."/>
            <person name="Ishmael J.E."/>
            <person name="Hansen S.G."/>
            <person name="Dowell P."/>
            <person name="Hruby D.E."/>
            <person name="Dawson M.I."/>
            <person name="Leid M."/>
        </authorList>
    </citation>
    <scope>INTERACTION WITH TAMALIN</scope>
</reference>
<reference key="6">
    <citation type="journal article" date="2010" name="Cell">
        <title>A tissue-specific atlas of mouse protein phosphorylation and expression.</title>
        <authorList>
            <person name="Huttlin E.L."/>
            <person name="Jedrychowski M.P."/>
            <person name="Elias J.E."/>
            <person name="Goswami T."/>
            <person name="Rad R."/>
            <person name="Beausoleil S.A."/>
            <person name="Villen J."/>
            <person name="Haas W."/>
            <person name="Sowa M.E."/>
            <person name="Gygi S.P."/>
        </authorList>
    </citation>
    <scope>IDENTIFICATION BY MASS SPECTROMETRY [LARGE SCALE ANALYSIS]</scope>
    <source>
        <tissue>Lung</tissue>
    </source>
</reference>
<reference key="7">
    <citation type="journal article" date="2000" name="Mol. Cell">
        <title>Structural basis for discrimination of 3-phosphoinositides by pleckstrin homology domains.</title>
        <authorList>
            <person name="Ferguson K.M."/>
            <person name="Kavran J.M."/>
            <person name="Sankaran V.G."/>
            <person name="Fournier E."/>
            <person name="Isakoff S.J."/>
            <person name="Skolnik E.Y."/>
            <person name="Lemmon M.A."/>
        </authorList>
    </citation>
    <scope>X-RAY CRYSTALLOGRAPHY (1.90 ANGSTROMS) OF 264-391 IN COMPLEX WITH PHOSPHATIDYLINOSITOL 3,4,5-TRISPHOSPHATE</scope>
    <scope>LIPID-BINDING</scope>
    <scope>DOMAIN</scope>
</reference>
<reference key="8">
    <citation type="journal article" date="2000" name="Mol. Cell">
        <title>Structural basis of 3-phosphoinositide recognition by pleckstrin homology domains.</title>
        <authorList>
            <person name="Lietzke S.E."/>
            <person name="Bose S."/>
            <person name="Cronin T."/>
            <person name="Klarlund J."/>
            <person name="Chawla A."/>
            <person name="Czech M.P."/>
            <person name="Lambright D.G."/>
        </authorList>
    </citation>
    <scope>X-RAY CRYSTALLOGRAPHY (1.50 ANGSTROMS) OF 261-387 IN COMPLEX WITH PHOSPHATIDYLINOSITOL 1,3,4,5-TETRAPHOSPHATE</scope>
    <scope>DOMAIN</scope>
    <scope>LIPID-BINDING</scope>
</reference>
<reference key="9">
    <citation type="journal article" date="2004" name="EMBO J.">
        <title>Structural determinants of phosphoinositide selectivity in splice variants of Grp1 family PH domains.</title>
        <authorList>
            <person name="Cronin T.C."/>
            <person name="DiNitto J.P."/>
            <person name="Czech M.P."/>
            <person name="Lambright D.G."/>
        </authorList>
    </citation>
    <scope>X-RAY CRYSTALLOGRAPHY (1.80 ANGSTROMS) OF 261-387 IN COMPLEX WITH PHOSPHATIDYLINOSITOL 3,4,5-TRISPHOSPHATE</scope>
    <scope>LIPID-BINDING</scope>
    <scope>DOMAIN</scope>
    <scope>MUTAGENESIS OF LYS-273; ARG-277; THR-280; LYS-282; ARG-284; TYR-295; ARG-305; LYS-343; ASN-354 AND HIS-355</scope>
</reference>
<reference key="10">
    <citation type="journal article" date="2007" name="Mol. Cell">
        <title>Structural basis and mechanism of autoregulation in 3-phosphoinositide-dependent Grp1 family Arf GTPase exchange factors.</title>
        <authorList>
            <person name="DiNitto J.P."/>
            <person name="Delprato A."/>
            <person name="Gabe Lee M.T."/>
            <person name="Cronin T.C."/>
            <person name="Huang S."/>
            <person name="Guilherme A."/>
            <person name="Czech M.P."/>
            <person name="Lambright D.G."/>
        </authorList>
    </citation>
    <scope>X-RAY CRYSTALLOGRAPHY (1.90 ANGSTROMS) OF 63-399 IN COMPLEX WITH PHOSPHATIDYLINOSITOL 1,3,4,5-TETRAPHOSPHATE</scope>
    <scope>FUNCTION</scope>
    <scope>DOMAIN</scope>
    <scope>AUTOINHIBITORY REGION</scope>
    <scope>SUBCELLULAR LOCATION</scope>
    <scope>MUTAGENESIS OF LEU-388 AND LYS-392</scope>
    <scope>LIPID-BINDING</scope>
</reference>
<reference key="11">
    <citation type="journal article" date="2010" name="Proc. Natl. Acad. Sci. U.S.A.">
        <title>FRMD4A regulates epithelial polarity by connecting Arf6 activation with the PAR complex.</title>
        <authorList>
            <person name="Ikenouchi J."/>
            <person name="Umeda M."/>
        </authorList>
    </citation>
    <scope>SUBCELLULAR LOCATION</scope>
    <scope>INTERACTION WITH FRMD4A AND FRMD4B</scope>
    <scope>MUTAGENESIS OF GLU-161</scope>
</reference>
<comment type="function">
    <text evidence="9 10">Promotes guanine-nucleotide exchange on ARF1. Promotes the activation of ARF factors through replacement of GDP with GTP (PubMed:18042453). Plays a role in the epithelial polarization (PubMed:20080746).</text>
</comment>
<comment type="subunit">
    <text evidence="5 6 7 8 9 10">Interacts with TAMALIN. Interacts with FRMD4A (PubMed:20080746). Interacts with FRMD4B (PubMed:20080746).</text>
</comment>
<comment type="subcellular location">
    <subcellularLocation>
        <location evidence="1">Cytoplasm</location>
        <location evidence="1">Cytosol</location>
    </subcellularLocation>
    <subcellularLocation>
        <location evidence="9">Cell membrane</location>
        <topology evidence="9">Peripheral membrane protein</topology>
    </subcellularLocation>
    <subcellularLocation>
        <location evidence="10">Cell junction</location>
        <location evidence="10">Adherens junction</location>
    </subcellularLocation>
    <subcellularLocation>
        <location evidence="10">Cell junction</location>
        <location evidence="10">Tight junction</location>
    </subcellularLocation>
    <text>Translocates from the cytosol to membranes enriched in phosphatidylinositol 3,4,5-trisphosphate.</text>
</comment>
<comment type="domain">
    <text>Binds via its PH domain to the inositol head group of phosphatidylinositol 3,4,5-trisphosphate.</text>
</comment>
<comment type="domain">
    <text>Autoinhibited by its C-terminal basic region.</text>
</comment>
<protein>
    <recommendedName>
        <fullName>Cytohesin-3</fullName>
    </recommendedName>
    <alternativeName>
        <fullName>ARF nucleotide-binding site opener 3</fullName>
        <shortName>Protein ARNO3</shortName>
    </alternativeName>
    <alternativeName>
        <fullName>General receptor of phosphoinositides 1</fullName>
        <shortName>Grp1</shortName>
    </alternativeName>
    <alternativeName>
        <fullName>PH, SEC7 and coiled-coil domain-containing protein 3</fullName>
        <shortName>CLM3</shortName>
    </alternativeName>
    <alternativeName>
        <fullName>SEC7 homolog C</fullName>
        <shortName>mSec7-3</shortName>
    </alternativeName>
</protein>
<keyword id="KW-0002">3D-structure</keyword>
<keyword id="KW-0965">Cell junction</keyword>
<keyword id="KW-1003">Cell membrane</keyword>
<keyword id="KW-0175">Coiled coil</keyword>
<keyword id="KW-0963">Cytoplasm</keyword>
<keyword id="KW-0344">Guanine-nucleotide releasing factor</keyword>
<keyword id="KW-0446">Lipid-binding</keyword>
<keyword id="KW-0472">Membrane</keyword>
<keyword id="KW-1185">Reference proteome</keyword>
<keyword id="KW-0796">Tight junction</keyword>
<accession>O08967</accession>
<accession>Q8CI93</accession>
<proteinExistence type="evidence at protein level"/>
<dbReference type="EMBL" id="AF001871">
    <property type="protein sequence ID" value="AAB60876.1"/>
    <property type="molecule type" value="Genomic_DNA"/>
</dbReference>
<dbReference type="EMBL" id="AB013470">
    <property type="protein sequence ID" value="BAA33433.1"/>
    <property type="molecule type" value="mRNA"/>
</dbReference>
<dbReference type="EMBL" id="AF084221">
    <property type="protein sequence ID" value="AAF23858.1"/>
    <property type="molecule type" value="mRNA"/>
</dbReference>
<dbReference type="EMBL" id="BC035296">
    <property type="protein sequence ID" value="AAH35296.2"/>
    <property type="molecule type" value="mRNA"/>
</dbReference>
<dbReference type="CCDS" id="CCDS19845.1"/>
<dbReference type="RefSeq" id="NP_035312.3">
    <property type="nucleotide sequence ID" value="NM_011182.4"/>
</dbReference>
<dbReference type="PDB" id="1FGY">
    <property type="method" value="X-ray"/>
    <property type="resolution" value="1.50 A"/>
    <property type="chains" value="A=261-387"/>
</dbReference>
<dbReference type="PDB" id="1FGZ">
    <property type="method" value="X-ray"/>
    <property type="resolution" value="2.05 A"/>
    <property type="chains" value="A=261-387"/>
</dbReference>
<dbReference type="PDB" id="1FHW">
    <property type="method" value="X-ray"/>
    <property type="resolution" value="1.90 A"/>
    <property type="chains" value="A/B=264-391"/>
</dbReference>
<dbReference type="PDB" id="1FHX">
    <property type="method" value="X-ray"/>
    <property type="resolution" value="2.50 A"/>
    <property type="chains" value="A/B=264-391"/>
</dbReference>
<dbReference type="PDB" id="1U2B">
    <property type="method" value="X-ray"/>
    <property type="resolution" value="1.80 A"/>
    <property type="chains" value="A=261-387"/>
</dbReference>
<dbReference type="PDB" id="2R09">
    <property type="method" value="X-ray"/>
    <property type="resolution" value="1.90 A"/>
    <property type="chains" value="A/B=63-399"/>
</dbReference>
<dbReference type="PDB" id="2R0D">
    <property type="method" value="X-ray"/>
    <property type="resolution" value="2.04 A"/>
    <property type="chains" value="A/B=63-399"/>
</dbReference>
<dbReference type="PDB" id="6BBP">
    <property type="method" value="EM"/>
    <property type="resolution" value="35.00 A"/>
    <property type="chains" value="A=63-399"/>
</dbReference>
<dbReference type="PDB" id="6BBQ">
    <property type="method" value="EM"/>
    <property type="resolution" value="35.00 A"/>
    <property type="chains" value="A=63-399"/>
</dbReference>
<dbReference type="PDBsum" id="1FGY"/>
<dbReference type="PDBsum" id="1FGZ"/>
<dbReference type="PDBsum" id="1FHW"/>
<dbReference type="PDBsum" id="1FHX"/>
<dbReference type="PDBsum" id="1U2B"/>
<dbReference type="PDBsum" id="2R09"/>
<dbReference type="PDBsum" id="2R0D"/>
<dbReference type="PDBsum" id="6BBP"/>
<dbReference type="PDBsum" id="6BBQ"/>
<dbReference type="BMRB" id="O08967"/>
<dbReference type="SASBDB" id="O08967"/>
<dbReference type="SMR" id="O08967"/>
<dbReference type="BioGRID" id="202413">
    <property type="interactions" value="6"/>
</dbReference>
<dbReference type="FunCoup" id="O08967">
    <property type="interactions" value="1628"/>
</dbReference>
<dbReference type="IntAct" id="O08967">
    <property type="interactions" value="4"/>
</dbReference>
<dbReference type="MINT" id="O08967"/>
<dbReference type="STRING" id="10090.ENSMUSP00000112157"/>
<dbReference type="ChEMBL" id="CHEMBL3763004"/>
<dbReference type="iPTMnet" id="O08967"/>
<dbReference type="PhosphoSitePlus" id="O08967"/>
<dbReference type="PaxDb" id="10090-ENSMUSP00000112157"/>
<dbReference type="ProteomicsDB" id="285443"/>
<dbReference type="Pumba" id="O08967"/>
<dbReference type="Antibodypedia" id="2818">
    <property type="antibodies" value="202 antibodies from 33 providers"/>
</dbReference>
<dbReference type="DNASU" id="19159"/>
<dbReference type="Ensembl" id="ENSMUST00000116456.10">
    <property type="protein sequence ID" value="ENSMUSP00000112157.4"/>
    <property type="gene ID" value="ENSMUSG00000018001.19"/>
</dbReference>
<dbReference type="GeneID" id="19159"/>
<dbReference type="KEGG" id="mmu:19159"/>
<dbReference type="UCSC" id="uc009ako.2">
    <property type="organism name" value="mouse"/>
</dbReference>
<dbReference type="AGR" id="MGI:1335107"/>
<dbReference type="CTD" id="9265"/>
<dbReference type="MGI" id="MGI:1335107">
    <property type="gene designation" value="Cyth3"/>
</dbReference>
<dbReference type="VEuPathDB" id="HostDB:ENSMUSG00000018001"/>
<dbReference type="eggNOG" id="KOG0930">
    <property type="taxonomic scope" value="Eukaryota"/>
</dbReference>
<dbReference type="GeneTree" id="ENSGT00940000155825"/>
<dbReference type="InParanoid" id="O08967"/>
<dbReference type="OMA" id="LLAKICW"/>
<dbReference type="OrthoDB" id="430364at2759"/>
<dbReference type="PhylomeDB" id="O08967"/>
<dbReference type="TreeFam" id="TF352091"/>
<dbReference type="Reactome" id="R-MMU-6811438">
    <property type="pathway name" value="Intra-Golgi traffic"/>
</dbReference>
<dbReference type="BioGRID-ORCS" id="19159">
    <property type="hits" value="2 hits in 81 CRISPR screens"/>
</dbReference>
<dbReference type="CD-CODE" id="CE726F99">
    <property type="entry name" value="Postsynaptic density"/>
</dbReference>
<dbReference type="ChiTaRS" id="Cyth3">
    <property type="organism name" value="mouse"/>
</dbReference>
<dbReference type="EvolutionaryTrace" id="O08967"/>
<dbReference type="PRO" id="PR:O08967"/>
<dbReference type="Proteomes" id="UP000000589">
    <property type="component" value="Chromosome 5"/>
</dbReference>
<dbReference type="RNAct" id="O08967">
    <property type="molecule type" value="protein"/>
</dbReference>
<dbReference type="Bgee" id="ENSMUSG00000018001">
    <property type="expression patterns" value="Expressed in superior cervical ganglion and 258 other cell types or tissues"/>
</dbReference>
<dbReference type="ExpressionAtlas" id="O08967">
    <property type="expression patterns" value="baseline and differential"/>
</dbReference>
<dbReference type="GO" id="GO:0005912">
    <property type="term" value="C:adherens junction"/>
    <property type="evidence" value="ECO:0000314"/>
    <property type="project" value="UniProtKB"/>
</dbReference>
<dbReference type="GO" id="GO:0005923">
    <property type="term" value="C:bicellular tight junction"/>
    <property type="evidence" value="ECO:0000314"/>
    <property type="project" value="UniProtKB"/>
</dbReference>
<dbReference type="GO" id="GO:0005737">
    <property type="term" value="C:cytoplasm"/>
    <property type="evidence" value="ECO:0000314"/>
    <property type="project" value="MGI"/>
</dbReference>
<dbReference type="GO" id="GO:0005829">
    <property type="term" value="C:cytosol"/>
    <property type="evidence" value="ECO:0000250"/>
    <property type="project" value="UniProtKB"/>
</dbReference>
<dbReference type="GO" id="GO:0005654">
    <property type="term" value="C:nucleoplasm"/>
    <property type="evidence" value="ECO:0007669"/>
    <property type="project" value="Ensembl"/>
</dbReference>
<dbReference type="GO" id="GO:0005886">
    <property type="term" value="C:plasma membrane"/>
    <property type="evidence" value="ECO:0000314"/>
    <property type="project" value="MGI"/>
</dbReference>
<dbReference type="GO" id="GO:0001726">
    <property type="term" value="C:ruffle"/>
    <property type="evidence" value="ECO:0000353"/>
    <property type="project" value="MGI"/>
</dbReference>
<dbReference type="GO" id="GO:0005085">
    <property type="term" value="F:guanyl-nucleotide exchange factor activity"/>
    <property type="evidence" value="ECO:0000250"/>
    <property type="project" value="UniProtKB"/>
</dbReference>
<dbReference type="GO" id="GO:0005547">
    <property type="term" value="F:phosphatidylinositol-3,4,5-trisphosphate binding"/>
    <property type="evidence" value="ECO:0000314"/>
    <property type="project" value="MGI"/>
</dbReference>
<dbReference type="GO" id="GO:0090162">
    <property type="term" value="P:establishment of epithelial cell polarity"/>
    <property type="evidence" value="ECO:0000315"/>
    <property type="project" value="MGI"/>
</dbReference>
<dbReference type="GO" id="GO:0048193">
    <property type="term" value="P:Golgi vesicle transport"/>
    <property type="evidence" value="ECO:0000250"/>
    <property type="project" value="UniProtKB"/>
</dbReference>
<dbReference type="GO" id="GO:0045785">
    <property type="term" value="P:positive regulation of cell adhesion"/>
    <property type="evidence" value="ECO:0000314"/>
    <property type="project" value="MGI"/>
</dbReference>
<dbReference type="GO" id="GO:0032012">
    <property type="term" value="P:regulation of ARF protein signal transduction"/>
    <property type="evidence" value="ECO:0007669"/>
    <property type="project" value="InterPro"/>
</dbReference>
<dbReference type="CDD" id="cd01252">
    <property type="entry name" value="PH_GRP1-like"/>
    <property type="match status" value="1"/>
</dbReference>
<dbReference type="CDD" id="cd00171">
    <property type="entry name" value="Sec7"/>
    <property type="match status" value="1"/>
</dbReference>
<dbReference type="FunFam" id="1.10.1000.11:FF:000002">
    <property type="entry name" value="Cytohesin 1"/>
    <property type="match status" value="1"/>
</dbReference>
<dbReference type="FunFam" id="1.10.220.20:FF:000003">
    <property type="entry name" value="Cytohesin 1"/>
    <property type="match status" value="1"/>
</dbReference>
<dbReference type="FunFam" id="2.30.29.30:FF:000009">
    <property type="entry name" value="Cytohesin 1"/>
    <property type="match status" value="1"/>
</dbReference>
<dbReference type="Gene3D" id="1.10.220.20">
    <property type="match status" value="1"/>
</dbReference>
<dbReference type="Gene3D" id="1.10.1000.11">
    <property type="entry name" value="Arf Nucleotide-binding Site Opener,domain 2"/>
    <property type="match status" value="1"/>
</dbReference>
<dbReference type="Gene3D" id="2.30.29.30">
    <property type="entry name" value="Pleckstrin-homology domain (PH domain)/Phosphotyrosine-binding domain (PTB)"/>
    <property type="match status" value="1"/>
</dbReference>
<dbReference type="InterPro" id="IPR011993">
    <property type="entry name" value="PH-like_dom_sf"/>
</dbReference>
<dbReference type="InterPro" id="IPR001849">
    <property type="entry name" value="PH_domain"/>
</dbReference>
<dbReference type="InterPro" id="IPR023394">
    <property type="entry name" value="Sec7_C_sf"/>
</dbReference>
<dbReference type="InterPro" id="IPR000904">
    <property type="entry name" value="Sec7_dom"/>
</dbReference>
<dbReference type="InterPro" id="IPR035999">
    <property type="entry name" value="Sec7_dom_sf"/>
</dbReference>
<dbReference type="PANTHER" id="PTHR10663:SF320">
    <property type="entry name" value="CYTOHESIN-3"/>
    <property type="match status" value="1"/>
</dbReference>
<dbReference type="PANTHER" id="PTHR10663">
    <property type="entry name" value="GUANYL-NUCLEOTIDE EXCHANGE FACTOR"/>
    <property type="match status" value="1"/>
</dbReference>
<dbReference type="Pfam" id="PF00169">
    <property type="entry name" value="PH"/>
    <property type="match status" value="1"/>
</dbReference>
<dbReference type="Pfam" id="PF01369">
    <property type="entry name" value="Sec7"/>
    <property type="match status" value="1"/>
</dbReference>
<dbReference type="SMART" id="SM00233">
    <property type="entry name" value="PH"/>
    <property type="match status" value="1"/>
</dbReference>
<dbReference type="SMART" id="SM00222">
    <property type="entry name" value="Sec7"/>
    <property type="match status" value="1"/>
</dbReference>
<dbReference type="SUPFAM" id="SSF50729">
    <property type="entry name" value="PH domain-like"/>
    <property type="match status" value="1"/>
</dbReference>
<dbReference type="SUPFAM" id="SSF48425">
    <property type="entry name" value="Sec7 domain"/>
    <property type="match status" value="1"/>
</dbReference>
<dbReference type="PROSITE" id="PS50003">
    <property type="entry name" value="PH_DOMAIN"/>
    <property type="match status" value="1"/>
</dbReference>
<dbReference type="PROSITE" id="PS50190">
    <property type="entry name" value="SEC7"/>
    <property type="match status" value="1"/>
</dbReference>
<organism>
    <name type="scientific">Mus musculus</name>
    <name type="common">Mouse</name>
    <dbReference type="NCBI Taxonomy" id="10090"/>
    <lineage>
        <taxon>Eukaryota</taxon>
        <taxon>Metazoa</taxon>
        <taxon>Chordata</taxon>
        <taxon>Craniata</taxon>
        <taxon>Vertebrata</taxon>
        <taxon>Euteleostomi</taxon>
        <taxon>Mammalia</taxon>
        <taxon>Eutheria</taxon>
        <taxon>Euarchontoglires</taxon>
        <taxon>Glires</taxon>
        <taxon>Rodentia</taxon>
        <taxon>Myomorpha</taxon>
        <taxon>Muroidea</taxon>
        <taxon>Muridae</taxon>
        <taxon>Murinae</taxon>
        <taxon>Mus</taxon>
        <taxon>Mus</taxon>
    </lineage>
</organism>
<name>CYH3_MOUSE</name>